<sequence length="259" mass="27964">MEPPGEKPGEAEALSITPQLLKSHSGEFALDSILLLKLRGLGVVDLGCLGECLNLEWLDLSGNALTHLGPLASLRQLAVLNVSNNRLTGLEPLAACENLQSLNAAGNLLTTPGQLQCLAGLQALEHLRLRDPLARLSNPLCANASYWAVVRELLPGLKVIDGERVSGRGSELYQLCRDLDSSLRSGSSPGPRAIEAQPWVEPGYWESWPIRSSSILEEACRQFQDTLQECLDLDRQASDSLAQAQQALSPAETTSSFVF</sequence>
<name>LRC61_MOUSE</name>
<reference key="1">
    <citation type="journal article" date="2005" name="Science">
        <title>The transcriptional landscape of the mammalian genome.</title>
        <authorList>
            <person name="Carninci P."/>
            <person name="Kasukawa T."/>
            <person name="Katayama S."/>
            <person name="Gough J."/>
            <person name="Frith M.C."/>
            <person name="Maeda N."/>
            <person name="Oyama R."/>
            <person name="Ravasi T."/>
            <person name="Lenhard B."/>
            <person name="Wells C."/>
            <person name="Kodzius R."/>
            <person name="Shimokawa K."/>
            <person name="Bajic V.B."/>
            <person name="Brenner S.E."/>
            <person name="Batalov S."/>
            <person name="Forrest A.R."/>
            <person name="Zavolan M."/>
            <person name="Davis M.J."/>
            <person name="Wilming L.G."/>
            <person name="Aidinis V."/>
            <person name="Allen J.E."/>
            <person name="Ambesi-Impiombato A."/>
            <person name="Apweiler R."/>
            <person name="Aturaliya R.N."/>
            <person name="Bailey T.L."/>
            <person name="Bansal M."/>
            <person name="Baxter L."/>
            <person name="Beisel K.W."/>
            <person name="Bersano T."/>
            <person name="Bono H."/>
            <person name="Chalk A.M."/>
            <person name="Chiu K.P."/>
            <person name="Choudhary V."/>
            <person name="Christoffels A."/>
            <person name="Clutterbuck D.R."/>
            <person name="Crowe M.L."/>
            <person name="Dalla E."/>
            <person name="Dalrymple B.P."/>
            <person name="de Bono B."/>
            <person name="Della Gatta G."/>
            <person name="di Bernardo D."/>
            <person name="Down T."/>
            <person name="Engstrom P."/>
            <person name="Fagiolini M."/>
            <person name="Faulkner G."/>
            <person name="Fletcher C.F."/>
            <person name="Fukushima T."/>
            <person name="Furuno M."/>
            <person name="Futaki S."/>
            <person name="Gariboldi M."/>
            <person name="Georgii-Hemming P."/>
            <person name="Gingeras T.R."/>
            <person name="Gojobori T."/>
            <person name="Green R.E."/>
            <person name="Gustincich S."/>
            <person name="Harbers M."/>
            <person name="Hayashi Y."/>
            <person name="Hensch T.K."/>
            <person name="Hirokawa N."/>
            <person name="Hill D."/>
            <person name="Huminiecki L."/>
            <person name="Iacono M."/>
            <person name="Ikeo K."/>
            <person name="Iwama A."/>
            <person name="Ishikawa T."/>
            <person name="Jakt M."/>
            <person name="Kanapin A."/>
            <person name="Katoh M."/>
            <person name="Kawasawa Y."/>
            <person name="Kelso J."/>
            <person name="Kitamura H."/>
            <person name="Kitano H."/>
            <person name="Kollias G."/>
            <person name="Krishnan S.P."/>
            <person name="Kruger A."/>
            <person name="Kummerfeld S.K."/>
            <person name="Kurochkin I.V."/>
            <person name="Lareau L.F."/>
            <person name="Lazarevic D."/>
            <person name="Lipovich L."/>
            <person name="Liu J."/>
            <person name="Liuni S."/>
            <person name="McWilliam S."/>
            <person name="Madan Babu M."/>
            <person name="Madera M."/>
            <person name="Marchionni L."/>
            <person name="Matsuda H."/>
            <person name="Matsuzawa S."/>
            <person name="Miki H."/>
            <person name="Mignone F."/>
            <person name="Miyake S."/>
            <person name="Morris K."/>
            <person name="Mottagui-Tabar S."/>
            <person name="Mulder N."/>
            <person name="Nakano N."/>
            <person name="Nakauchi H."/>
            <person name="Ng P."/>
            <person name="Nilsson R."/>
            <person name="Nishiguchi S."/>
            <person name="Nishikawa S."/>
            <person name="Nori F."/>
            <person name="Ohara O."/>
            <person name="Okazaki Y."/>
            <person name="Orlando V."/>
            <person name="Pang K.C."/>
            <person name="Pavan W.J."/>
            <person name="Pavesi G."/>
            <person name="Pesole G."/>
            <person name="Petrovsky N."/>
            <person name="Piazza S."/>
            <person name="Reed J."/>
            <person name="Reid J.F."/>
            <person name="Ring B.Z."/>
            <person name="Ringwald M."/>
            <person name="Rost B."/>
            <person name="Ruan Y."/>
            <person name="Salzberg S.L."/>
            <person name="Sandelin A."/>
            <person name="Schneider C."/>
            <person name="Schoenbach C."/>
            <person name="Sekiguchi K."/>
            <person name="Semple C.A."/>
            <person name="Seno S."/>
            <person name="Sessa L."/>
            <person name="Sheng Y."/>
            <person name="Shibata Y."/>
            <person name="Shimada H."/>
            <person name="Shimada K."/>
            <person name="Silva D."/>
            <person name="Sinclair B."/>
            <person name="Sperling S."/>
            <person name="Stupka E."/>
            <person name="Sugiura K."/>
            <person name="Sultana R."/>
            <person name="Takenaka Y."/>
            <person name="Taki K."/>
            <person name="Tammoja K."/>
            <person name="Tan S.L."/>
            <person name="Tang S."/>
            <person name="Taylor M.S."/>
            <person name="Tegner J."/>
            <person name="Teichmann S.A."/>
            <person name="Ueda H.R."/>
            <person name="van Nimwegen E."/>
            <person name="Verardo R."/>
            <person name="Wei C.L."/>
            <person name="Yagi K."/>
            <person name="Yamanishi H."/>
            <person name="Zabarovsky E."/>
            <person name="Zhu S."/>
            <person name="Zimmer A."/>
            <person name="Hide W."/>
            <person name="Bult C."/>
            <person name="Grimmond S.M."/>
            <person name="Teasdale R.D."/>
            <person name="Liu E.T."/>
            <person name="Brusic V."/>
            <person name="Quackenbush J."/>
            <person name="Wahlestedt C."/>
            <person name="Mattick J.S."/>
            <person name="Hume D.A."/>
            <person name="Kai C."/>
            <person name="Sasaki D."/>
            <person name="Tomaru Y."/>
            <person name="Fukuda S."/>
            <person name="Kanamori-Katayama M."/>
            <person name="Suzuki M."/>
            <person name="Aoki J."/>
            <person name="Arakawa T."/>
            <person name="Iida J."/>
            <person name="Imamura K."/>
            <person name="Itoh M."/>
            <person name="Kato T."/>
            <person name="Kawaji H."/>
            <person name="Kawagashira N."/>
            <person name="Kawashima T."/>
            <person name="Kojima M."/>
            <person name="Kondo S."/>
            <person name="Konno H."/>
            <person name="Nakano K."/>
            <person name="Ninomiya N."/>
            <person name="Nishio T."/>
            <person name="Okada M."/>
            <person name="Plessy C."/>
            <person name="Shibata K."/>
            <person name="Shiraki T."/>
            <person name="Suzuki S."/>
            <person name="Tagami M."/>
            <person name="Waki K."/>
            <person name="Watahiki A."/>
            <person name="Okamura-Oho Y."/>
            <person name="Suzuki H."/>
            <person name="Kawai J."/>
            <person name="Hayashizaki Y."/>
        </authorList>
    </citation>
    <scope>NUCLEOTIDE SEQUENCE [LARGE SCALE MRNA]</scope>
    <source>
        <strain>C57BL/6J</strain>
        <tissue>Diencephalon</tissue>
        <tissue>Eye</tissue>
    </source>
</reference>
<reference key="2">
    <citation type="journal article" date="2004" name="Genome Res.">
        <title>The status, quality, and expansion of the NIH full-length cDNA project: the Mammalian Gene Collection (MGC).</title>
        <authorList>
            <consortium name="The MGC Project Team"/>
        </authorList>
    </citation>
    <scope>NUCLEOTIDE SEQUENCE [LARGE SCALE MRNA]</scope>
    <source>
        <strain>FVB/N</strain>
        <tissue>Mammary tumor</tissue>
    </source>
</reference>
<gene>
    <name type="primary">Lrrc61</name>
</gene>
<dbReference type="EMBL" id="AK136901">
    <property type="protein sequence ID" value="BAE23163.1"/>
    <property type="molecule type" value="mRNA"/>
</dbReference>
<dbReference type="EMBL" id="AK143222">
    <property type="protein sequence ID" value="BAE25315.1"/>
    <property type="molecule type" value="mRNA"/>
</dbReference>
<dbReference type="EMBL" id="AK171463">
    <property type="protein sequence ID" value="BAE42469.1"/>
    <property type="molecule type" value="mRNA"/>
</dbReference>
<dbReference type="EMBL" id="BC027309">
    <property type="protein sequence ID" value="AAH27309.1"/>
    <property type="molecule type" value="mRNA"/>
</dbReference>
<dbReference type="CCDS" id="CCDS39478.1"/>
<dbReference type="RefSeq" id="NP_001103630.1">
    <property type="nucleotide sequence ID" value="NM_001110160.1"/>
</dbReference>
<dbReference type="RefSeq" id="NP_808404.2">
    <property type="nucleotide sequence ID" value="NM_177736.3"/>
</dbReference>
<dbReference type="RefSeq" id="XP_006506135.1">
    <property type="nucleotide sequence ID" value="XM_006506072.2"/>
</dbReference>
<dbReference type="RefSeq" id="XP_006506136.1">
    <property type="nucleotide sequence ID" value="XM_006506073.2"/>
</dbReference>
<dbReference type="RefSeq" id="XP_006506137.1">
    <property type="nucleotide sequence ID" value="XM_006506074.2"/>
</dbReference>
<dbReference type="RefSeq" id="XP_006506138.1">
    <property type="nucleotide sequence ID" value="XM_006506075.2"/>
</dbReference>
<dbReference type="RefSeq" id="XP_006506139.1">
    <property type="nucleotide sequence ID" value="XM_006506076.2"/>
</dbReference>
<dbReference type="SMR" id="Q8R2R5"/>
<dbReference type="FunCoup" id="Q8R2R5">
    <property type="interactions" value="439"/>
</dbReference>
<dbReference type="STRING" id="10090.ENSMUSP00000110192"/>
<dbReference type="PhosphoSitePlus" id="Q8R2R5"/>
<dbReference type="PaxDb" id="10090-ENSMUSP00000110192"/>
<dbReference type="ProteomicsDB" id="290159"/>
<dbReference type="DNASU" id="243371"/>
<dbReference type="GeneID" id="243371"/>
<dbReference type="KEGG" id="mmu:243371"/>
<dbReference type="UCSC" id="uc009buq.2">
    <property type="organism name" value="mouse"/>
</dbReference>
<dbReference type="AGR" id="MGI:2652848"/>
<dbReference type="CTD" id="65999"/>
<dbReference type="MGI" id="MGI:2652848">
    <property type="gene designation" value="Lrrc61"/>
</dbReference>
<dbReference type="eggNOG" id="KOG0531">
    <property type="taxonomic scope" value="Eukaryota"/>
</dbReference>
<dbReference type="InParanoid" id="Q8R2R5"/>
<dbReference type="OrthoDB" id="433501at2759"/>
<dbReference type="PhylomeDB" id="Q8R2R5"/>
<dbReference type="TreeFam" id="TF329333"/>
<dbReference type="BioGRID-ORCS" id="243371">
    <property type="hits" value="3 hits in 79 CRISPR screens"/>
</dbReference>
<dbReference type="ChiTaRS" id="Lrrc61">
    <property type="organism name" value="mouse"/>
</dbReference>
<dbReference type="PRO" id="PR:Q8R2R5"/>
<dbReference type="Proteomes" id="UP000000589">
    <property type="component" value="Unplaced"/>
</dbReference>
<dbReference type="RNAct" id="Q8R2R5">
    <property type="molecule type" value="protein"/>
</dbReference>
<dbReference type="FunFam" id="3.80.10.10:FF:000252">
    <property type="entry name" value="Leucine-rich repeat-containing protein 61"/>
    <property type="match status" value="1"/>
</dbReference>
<dbReference type="Gene3D" id="3.80.10.10">
    <property type="entry name" value="Ribonuclease Inhibitor"/>
    <property type="match status" value="1"/>
</dbReference>
<dbReference type="InterPro" id="IPR001611">
    <property type="entry name" value="Leu-rich_rpt"/>
</dbReference>
<dbReference type="InterPro" id="IPR032675">
    <property type="entry name" value="LRR_dom_sf"/>
</dbReference>
<dbReference type="PANTHER" id="PTHR18849">
    <property type="entry name" value="LEUCINE RICH REPEAT PROTEIN"/>
    <property type="match status" value="1"/>
</dbReference>
<dbReference type="PANTHER" id="PTHR18849:SF8">
    <property type="entry name" value="LEUCINE-RICH REPEAT-CONTAINING PROTEIN 61"/>
    <property type="match status" value="1"/>
</dbReference>
<dbReference type="Pfam" id="PF14580">
    <property type="entry name" value="LRR_9"/>
    <property type="match status" value="1"/>
</dbReference>
<dbReference type="PRINTS" id="PR00019">
    <property type="entry name" value="LEURICHRPT"/>
</dbReference>
<dbReference type="SUPFAM" id="SSF52058">
    <property type="entry name" value="L domain-like"/>
    <property type="match status" value="1"/>
</dbReference>
<dbReference type="PROSITE" id="PS51450">
    <property type="entry name" value="LRR"/>
    <property type="match status" value="3"/>
</dbReference>
<feature type="chain" id="PRO_0000236797" description="Leucine-rich repeat-containing protein 61">
    <location>
        <begin position="1"/>
        <end position="259"/>
    </location>
</feature>
<feature type="repeat" description="LRR 1">
    <location>
        <begin position="54"/>
        <end position="75"/>
    </location>
</feature>
<feature type="repeat" description="LRR 2">
    <location>
        <begin position="76"/>
        <end position="97"/>
    </location>
</feature>
<feature type="repeat" description="LRR 3">
    <location>
        <begin position="98"/>
        <end position="119"/>
    </location>
</feature>
<feature type="domain" description="LRRCT">
    <location>
        <begin position="138"/>
        <end position="178"/>
    </location>
</feature>
<feature type="sequence conflict" description="In Ref. 1; BAE42469." evidence="1" ref="1">
    <original>G</original>
    <variation>V</variation>
    <location>
        <position position="47"/>
    </location>
</feature>
<feature type="sequence conflict" description="In Ref. 1; BAE23163/BAE25315/BAE42469." evidence="1" ref="1">
    <original>R</original>
    <variation>Q</variation>
    <location>
        <position position="151"/>
    </location>
</feature>
<proteinExistence type="evidence at transcript level"/>
<accession>Q8R2R5</accession>
<accession>Q3TB45</accession>
<accession>Q3UPT0</accession>
<keyword id="KW-0433">Leucine-rich repeat</keyword>
<keyword id="KW-1185">Reference proteome</keyword>
<keyword id="KW-0677">Repeat</keyword>
<evidence type="ECO:0000305" key="1"/>
<organism>
    <name type="scientific">Mus musculus</name>
    <name type="common">Mouse</name>
    <dbReference type="NCBI Taxonomy" id="10090"/>
    <lineage>
        <taxon>Eukaryota</taxon>
        <taxon>Metazoa</taxon>
        <taxon>Chordata</taxon>
        <taxon>Craniata</taxon>
        <taxon>Vertebrata</taxon>
        <taxon>Euteleostomi</taxon>
        <taxon>Mammalia</taxon>
        <taxon>Eutheria</taxon>
        <taxon>Euarchontoglires</taxon>
        <taxon>Glires</taxon>
        <taxon>Rodentia</taxon>
        <taxon>Myomorpha</taxon>
        <taxon>Muroidea</taxon>
        <taxon>Muridae</taxon>
        <taxon>Murinae</taxon>
        <taxon>Mus</taxon>
        <taxon>Mus</taxon>
    </lineage>
</organism>
<protein>
    <recommendedName>
        <fullName>Leucine-rich repeat-containing protein 61</fullName>
    </recommendedName>
</protein>